<organism>
    <name type="scientific">Escherichia coli</name>
    <dbReference type="NCBI Taxonomy" id="562"/>
    <lineage>
        <taxon>Bacteria</taxon>
        <taxon>Pseudomonadati</taxon>
        <taxon>Pseudomonadota</taxon>
        <taxon>Gammaproteobacteria</taxon>
        <taxon>Enterobacterales</taxon>
        <taxon>Enterobacteriaceae</taxon>
        <taxon>Escherichia</taxon>
    </lineage>
</organism>
<reference key="1">
    <citation type="journal article" date="1987" name="Mol. Gen. Genet.">
        <title>Mobilization of the non-conjugative plasmid RSF1010: a genetic and DNA sequence analysis of the mobilization region.</title>
        <authorList>
            <person name="Derbyshire K.M."/>
            <person name="Hatfull G."/>
            <person name="Willetts N."/>
        </authorList>
    </citation>
    <scope>NUCLEOTIDE SEQUENCE [GENOMIC DNA]</scope>
</reference>
<reference key="2">
    <citation type="journal article" date="1989" name="Gene">
        <title>Complete nucleotide sequence and gene organization of the broad-host-range plasmid RSF1010.</title>
        <authorList>
            <person name="Scholz P."/>
            <person name="Haring V."/>
            <person name="Wittmann-Liebold B."/>
            <person name="Ashman K."/>
            <person name="Bagdasarian M."/>
            <person name="Scherzinger E."/>
        </authorList>
    </citation>
    <scope>NUCLEOTIDE SEQUENCE [GENOMIC DNA]</scope>
</reference>
<proteinExistence type="predicted"/>
<feature type="chain" id="PRO_0000068394" description="Mobilization protein C">
    <location>
        <begin position="1"/>
        <end position="94"/>
    </location>
</feature>
<comment type="function">
    <text>This protein is essential to promote the specific transfer of the plasmid in the presence of conjugative plasmids.</text>
</comment>
<comment type="subunit">
    <text>Interacts with MobA and MobB to form the relaxosome.</text>
</comment>
<keyword id="KW-0184">Conjugation</keyword>
<keyword id="KW-0499">Mobility protein</keyword>
<keyword id="KW-0614">Plasmid</keyword>
<gene>
    <name type="primary">mobC</name>
</gene>
<accession>P07114</accession>
<dbReference type="EMBL" id="X04830">
    <property type="protein sequence ID" value="CAA28519.1"/>
    <property type="molecule type" value="Genomic_DNA"/>
</dbReference>
<dbReference type="EMBL" id="M28829">
    <property type="protein sequence ID" value="AAA26444.1"/>
    <property type="molecule type" value="Genomic_DNA"/>
</dbReference>
<dbReference type="PIR" id="JH0125">
    <property type="entry name" value="JH0125"/>
</dbReference>
<dbReference type="RefSeq" id="NP_044303.1">
    <property type="nucleotide sequence ID" value="NC_001740.1"/>
</dbReference>
<dbReference type="RefSeq" id="WP_000238497.1">
    <property type="nucleotide sequence ID" value="NZ_WVUO01000113.1"/>
</dbReference>
<dbReference type="SMR" id="P07114"/>
<geneLocation type="plasmid">
    <name>IncQ RSF1010</name>
</geneLocation>
<protein>
    <recommendedName>
        <fullName>Mobilization protein C</fullName>
    </recommendedName>
</protein>
<sequence>MVKGSNKAADRLAKLEEQRARINAEIQRVRAREQQQERKNETRRKVLVGAMILAKVNSSEWPEDRLMAAMDAYLERDHDRALFGLPPRQKDEPG</sequence>
<name>MOBC_ECOLX</name>